<dbReference type="EMBL" id="AF227257">
    <property type="protein sequence ID" value="AAG10246.1"/>
    <property type="molecule type" value="mRNA"/>
</dbReference>
<dbReference type="EMBL" id="AF265666">
    <property type="protein sequence ID" value="AAG10000.1"/>
    <property type="molecule type" value="mRNA"/>
</dbReference>
<dbReference type="EMBL" id="AF265667">
    <property type="protein sequence ID" value="AAG10001.1"/>
    <property type="molecule type" value="mRNA"/>
</dbReference>
<dbReference type="EMBL" id="AF260257">
    <property type="protein sequence ID" value="AAF91371.1"/>
    <property type="molecule type" value="mRNA"/>
</dbReference>
<dbReference type="EMBL" id="AJ417048">
    <property type="protein sequence ID" value="CAD01136.1"/>
    <property type="molecule type" value="Genomic_DNA"/>
</dbReference>
<dbReference type="EMBL" id="AJ417049">
    <property type="protein sequence ID" value="CAD01136.1"/>
    <property type="status" value="JOINED"/>
    <property type="molecule type" value="Genomic_DNA"/>
</dbReference>
<dbReference type="EMBL" id="AJ417050">
    <property type="protein sequence ID" value="CAD01136.1"/>
    <property type="status" value="JOINED"/>
    <property type="molecule type" value="Genomic_DNA"/>
</dbReference>
<dbReference type="EMBL" id="AJ417051">
    <property type="protein sequence ID" value="CAD01136.1"/>
    <property type="status" value="JOINED"/>
    <property type="molecule type" value="Genomic_DNA"/>
</dbReference>
<dbReference type="EMBL" id="AJ417052">
    <property type="protein sequence ID" value="CAD01136.1"/>
    <property type="status" value="JOINED"/>
    <property type="molecule type" value="Genomic_DNA"/>
</dbReference>
<dbReference type="EMBL" id="AJ417053">
    <property type="protein sequence ID" value="CAD01136.1"/>
    <property type="status" value="JOINED"/>
    <property type="molecule type" value="Genomic_DNA"/>
</dbReference>
<dbReference type="EMBL" id="AJ417054">
    <property type="protein sequence ID" value="CAD01136.1"/>
    <property type="status" value="JOINED"/>
    <property type="molecule type" value="Genomic_DNA"/>
</dbReference>
<dbReference type="EMBL" id="AJ417055">
    <property type="protein sequence ID" value="CAD01136.1"/>
    <property type="status" value="JOINED"/>
    <property type="molecule type" value="Genomic_DNA"/>
</dbReference>
<dbReference type="EMBL" id="AJ417056">
    <property type="protein sequence ID" value="CAD01136.1"/>
    <property type="status" value="JOINED"/>
    <property type="molecule type" value="Genomic_DNA"/>
</dbReference>
<dbReference type="EMBL" id="AJ417057">
    <property type="protein sequence ID" value="CAD01136.1"/>
    <property type="status" value="JOINED"/>
    <property type="molecule type" value="Genomic_DNA"/>
</dbReference>
<dbReference type="EMBL" id="AJ417058">
    <property type="protein sequence ID" value="CAD01136.1"/>
    <property type="status" value="JOINED"/>
    <property type="molecule type" value="Genomic_DNA"/>
</dbReference>
<dbReference type="EMBL" id="AJ417059">
    <property type="protein sequence ID" value="CAD01136.1"/>
    <property type="status" value="JOINED"/>
    <property type="molecule type" value="Genomic_DNA"/>
</dbReference>
<dbReference type="EMBL" id="AJ417060">
    <property type="protein sequence ID" value="CAD01136.1"/>
    <property type="status" value="JOINED"/>
    <property type="molecule type" value="Genomic_DNA"/>
</dbReference>
<dbReference type="EMBL" id="AJ417061">
    <property type="protein sequence ID" value="CAD01136.1"/>
    <property type="status" value="JOINED"/>
    <property type="molecule type" value="Genomic_DNA"/>
</dbReference>
<dbReference type="EMBL" id="AJ417062">
    <property type="protein sequence ID" value="CAD01136.1"/>
    <property type="status" value="JOINED"/>
    <property type="molecule type" value="Genomic_DNA"/>
</dbReference>
<dbReference type="EMBL" id="AJ417063">
    <property type="protein sequence ID" value="CAD01136.1"/>
    <property type="status" value="JOINED"/>
    <property type="molecule type" value="Genomic_DNA"/>
</dbReference>
<dbReference type="EMBL" id="AJ417064">
    <property type="protein sequence ID" value="CAD01136.1"/>
    <property type="status" value="JOINED"/>
    <property type="molecule type" value="Genomic_DNA"/>
</dbReference>
<dbReference type="EMBL" id="AJ417065">
    <property type="protein sequence ID" value="CAD01136.1"/>
    <property type="status" value="JOINED"/>
    <property type="molecule type" value="Genomic_DNA"/>
</dbReference>
<dbReference type="EMBL" id="AJ417066">
    <property type="protein sequence ID" value="CAD01136.1"/>
    <property type="status" value="JOINED"/>
    <property type="molecule type" value="Genomic_DNA"/>
</dbReference>
<dbReference type="EMBL" id="AJ417067">
    <property type="protein sequence ID" value="CAD01135.1"/>
    <property type="molecule type" value="mRNA"/>
</dbReference>
<dbReference type="EMBL" id="AL135744">
    <property type="status" value="NOT_ANNOTATED_CDS"/>
    <property type="molecule type" value="Genomic_DNA"/>
</dbReference>
<dbReference type="EMBL" id="BC039089">
    <property type="protein sequence ID" value="AAH39089.1"/>
    <property type="molecule type" value="mRNA"/>
</dbReference>
<dbReference type="EMBL" id="BX571740">
    <property type="protein sequence ID" value="CAE11866.1"/>
    <property type="status" value="ALT_INIT"/>
    <property type="molecule type" value="mRNA"/>
</dbReference>
<dbReference type="CCDS" id="CCDS45080.1">
    <molecule id="Q96KN7-1"/>
</dbReference>
<dbReference type="CCDS" id="CCDS91848.1">
    <molecule id="Q96KN7-4"/>
</dbReference>
<dbReference type="RefSeq" id="NP_001364452.1">
    <molecule id="Q96KN7-4"/>
    <property type="nucleotide sequence ID" value="NM_001377523.1"/>
</dbReference>
<dbReference type="RefSeq" id="NP_065099.3">
    <molecule id="Q96KN7-1"/>
    <property type="nucleotide sequence ID" value="NM_020366.3"/>
</dbReference>
<dbReference type="PDB" id="4QAM">
    <property type="method" value="X-ray"/>
    <property type="resolution" value="1.83 A"/>
    <property type="chains" value="B=1091-1286"/>
</dbReference>
<dbReference type="PDBsum" id="4QAM"/>
<dbReference type="SMR" id="Q96KN7"/>
<dbReference type="BioGRID" id="121364">
    <property type="interactions" value="70"/>
</dbReference>
<dbReference type="CORUM" id="Q96KN7"/>
<dbReference type="FunCoup" id="Q96KN7">
    <property type="interactions" value="58"/>
</dbReference>
<dbReference type="IntAct" id="Q96KN7">
    <property type="interactions" value="63"/>
</dbReference>
<dbReference type="STRING" id="9606.ENSP00000382895"/>
<dbReference type="GlyGen" id="Q96KN7">
    <property type="glycosylation" value="1 site, 1 O-linked glycan (1 site)"/>
</dbReference>
<dbReference type="iPTMnet" id="Q96KN7"/>
<dbReference type="PhosphoSitePlus" id="Q96KN7"/>
<dbReference type="BioMuta" id="RPGRIP1"/>
<dbReference type="DMDM" id="296452882"/>
<dbReference type="jPOST" id="Q96KN7"/>
<dbReference type="MassIVE" id="Q96KN7"/>
<dbReference type="PaxDb" id="9606-ENSP00000382895"/>
<dbReference type="PeptideAtlas" id="Q96KN7"/>
<dbReference type="ProteomicsDB" id="77089">
    <molecule id="Q96KN7-1"/>
</dbReference>
<dbReference type="ProteomicsDB" id="77090">
    <molecule id="Q96KN7-2"/>
</dbReference>
<dbReference type="ProteomicsDB" id="77091">
    <molecule id="Q96KN7-3"/>
</dbReference>
<dbReference type="ProteomicsDB" id="77092">
    <molecule id="Q96KN7-4"/>
</dbReference>
<dbReference type="ProteomicsDB" id="77093">
    <molecule id="Q96KN7-5"/>
</dbReference>
<dbReference type="ProteomicsDB" id="77094">
    <molecule id="Q96KN7-6"/>
</dbReference>
<dbReference type="Antibodypedia" id="47230">
    <property type="antibodies" value="100 antibodies from 23 providers"/>
</dbReference>
<dbReference type="DNASU" id="57096"/>
<dbReference type="Ensembl" id="ENST00000382933.8">
    <molecule id="Q96KN7-4"/>
    <property type="protein sequence ID" value="ENSP00000372391.4"/>
    <property type="gene ID" value="ENSG00000092200.13"/>
</dbReference>
<dbReference type="Ensembl" id="ENST00000400017.7">
    <molecule id="Q96KN7-1"/>
    <property type="protein sequence ID" value="ENSP00000382895.2"/>
    <property type="gene ID" value="ENSG00000092200.13"/>
</dbReference>
<dbReference type="GeneID" id="57096"/>
<dbReference type="KEGG" id="hsa:57096"/>
<dbReference type="MANE-Select" id="ENST00000400017.7">
    <property type="protein sequence ID" value="ENSP00000382895.2"/>
    <property type="RefSeq nucleotide sequence ID" value="NM_020366.4"/>
    <property type="RefSeq protein sequence ID" value="NP_065099.3"/>
</dbReference>
<dbReference type="UCSC" id="uc001wag.4">
    <molecule id="Q96KN7-1"/>
    <property type="organism name" value="human"/>
</dbReference>
<dbReference type="AGR" id="HGNC:13436"/>
<dbReference type="CTD" id="57096"/>
<dbReference type="DisGeNET" id="57096"/>
<dbReference type="GeneCards" id="RPGRIP1"/>
<dbReference type="HGNC" id="HGNC:13436">
    <property type="gene designation" value="RPGRIP1"/>
</dbReference>
<dbReference type="HPA" id="ENSG00000092200">
    <property type="expression patterns" value="Group enriched (retina, testis)"/>
</dbReference>
<dbReference type="MalaCards" id="RPGRIP1"/>
<dbReference type="MIM" id="605446">
    <property type="type" value="gene"/>
</dbReference>
<dbReference type="MIM" id="608194">
    <property type="type" value="phenotype"/>
</dbReference>
<dbReference type="MIM" id="613826">
    <property type="type" value="phenotype"/>
</dbReference>
<dbReference type="neXtProt" id="NX_Q96KN7"/>
<dbReference type="OpenTargets" id="ENSG00000092200"/>
<dbReference type="Orphanet" id="1872">
    <property type="disease" value="Cone rod dystrophy"/>
</dbReference>
<dbReference type="Orphanet" id="65">
    <property type="disease" value="Leber congenital amaurosis"/>
</dbReference>
<dbReference type="Orphanet" id="564">
    <property type="disease" value="Meckel syndrome"/>
</dbReference>
<dbReference type="PharmGKB" id="PA34657"/>
<dbReference type="VEuPathDB" id="HostDB:ENSG00000092200"/>
<dbReference type="eggNOG" id="ENOG502R3GU">
    <property type="taxonomic scope" value="Eukaryota"/>
</dbReference>
<dbReference type="GeneTree" id="ENSGT00520000055620"/>
<dbReference type="HOGENOM" id="CLU_468463_0_0_1"/>
<dbReference type="InParanoid" id="Q96KN7"/>
<dbReference type="OMA" id="NTLAAGW"/>
<dbReference type="OrthoDB" id="2133912at2759"/>
<dbReference type="PAN-GO" id="Q96KN7">
    <property type="GO annotations" value="3 GO annotations based on evolutionary models"/>
</dbReference>
<dbReference type="PhylomeDB" id="Q96KN7"/>
<dbReference type="TreeFam" id="TF328883"/>
<dbReference type="PathwayCommons" id="Q96KN7"/>
<dbReference type="SignaLink" id="Q96KN7"/>
<dbReference type="SIGNOR" id="Q96KN7"/>
<dbReference type="BioGRID-ORCS" id="57096">
    <property type="hits" value="25 hits in 1146 CRISPR screens"/>
</dbReference>
<dbReference type="CD-CODE" id="8C2F96ED">
    <property type="entry name" value="Centrosome"/>
</dbReference>
<dbReference type="ChiTaRS" id="RPGRIP1">
    <property type="organism name" value="human"/>
</dbReference>
<dbReference type="EvolutionaryTrace" id="Q96KN7"/>
<dbReference type="GeneWiki" id="RPGRIP1"/>
<dbReference type="GenomeRNAi" id="57096"/>
<dbReference type="Pharos" id="Q96KN7">
    <property type="development level" value="Tbio"/>
</dbReference>
<dbReference type="PRO" id="PR:Q96KN7"/>
<dbReference type="Proteomes" id="UP000005640">
    <property type="component" value="Chromosome 14"/>
</dbReference>
<dbReference type="RNAct" id="Q96KN7">
    <property type="molecule type" value="protein"/>
</dbReference>
<dbReference type="Bgee" id="ENSG00000092200">
    <property type="expression patterns" value="Expressed in left testis and 115 other cell types or tissues"/>
</dbReference>
<dbReference type="ExpressionAtlas" id="Q96KN7">
    <property type="expression patterns" value="baseline and differential"/>
</dbReference>
<dbReference type="GO" id="GO:0005930">
    <property type="term" value="C:axoneme"/>
    <property type="evidence" value="ECO:0007669"/>
    <property type="project" value="Ensembl"/>
</dbReference>
<dbReference type="GO" id="GO:0005929">
    <property type="term" value="C:cilium"/>
    <property type="evidence" value="ECO:0000314"/>
    <property type="project" value="HPA"/>
</dbReference>
<dbReference type="GO" id="GO:0005829">
    <property type="term" value="C:cytosol"/>
    <property type="evidence" value="ECO:0000314"/>
    <property type="project" value="HPA"/>
</dbReference>
<dbReference type="GO" id="GO:0045171">
    <property type="term" value="C:intercellular bridge"/>
    <property type="evidence" value="ECO:0000314"/>
    <property type="project" value="HPA"/>
</dbReference>
<dbReference type="GO" id="GO:0043231">
    <property type="term" value="C:intracellular membrane-bounded organelle"/>
    <property type="evidence" value="ECO:0000314"/>
    <property type="project" value="HPA"/>
</dbReference>
<dbReference type="GO" id="GO:0015630">
    <property type="term" value="C:microtubule cytoskeleton"/>
    <property type="evidence" value="ECO:0000314"/>
    <property type="project" value="HPA"/>
</dbReference>
<dbReference type="GO" id="GO:0032391">
    <property type="term" value="C:photoreceptor connecting cilium"/>
    <property type="evidence" value="ECO:0000250"/>
    <property type="project" value="UniProtKB"/>
</dbReference>
<dbReference type="GO" id="GO:0120206">
    <property type="term" value="C:photoreceptor distal connecting cilium"/>
    <property type="evidence" value="ECO:0007669"/>
    <property type="project" value="Ensembl"/>
</dbReference>
<dbReference type="GO" id="GO:0042462">
    <property type="term" value="P:eye photoreceptor cell development"/>
    <property type="evidence" value="ECO:0007669"/>
    <property type="project" value="Ensembl"/>
</dbReference>
<dbReference type="GO" id="GO:0061351">
    <property type="term" value="P:neural precursor cell proliferation"/>
    <property type="evidence" value="ECO:0007669"/>
    <property type="project" value="Ensembl"/>
</dbReference>
<dbReference type="GO" id="GO:1905515">
    <property type="term" value="P:non-motile cilium assembly"/>
    <property type="evidence" value="ECO:0000318"/>
    <property type="project" value="GO_Central"/>
</dbReference>
<dbReference type="GO" id="GO:0060041">
    <property type="term" value="P:retina development in camera-type eye"/>
    <property type="evidence" value="ECO:0007669"/>
    <property type="project" value="Ensembl"/>
</dbReference>
<dbReference type="GO" id="GO:0007601">
    <property type="term" value="P:visual perception"/>
    <property type="evidence" value="ECO:0007669"/>
    <property type="project" value="UniProtKB-KW"/>
</dbReference>
<dbReference type="CDD" id="cd00030">
    <property type="entry name" value="C2"/>
    <property type="match status" value="1"/>
</dbReference>
<dbReference type="FunFam" id="2.60.40.150:FF:000073">
    <property type="entry name" value="protein fantom isoform X1"/>
    <property type="match status" value="1"/>
</dbReference>
<dbReference type="FunFam" id="2.60.40.150:FF:000075">
    <property type="entry name" value="protein fantom isoform X1"/>
    <property type="match status" value="1"/>
</dbReference>
<dbReference type="FunFam" id="2.60.40.150:FF:000189">
    <property type="entry name" value="X-linked retinitis pigmentosa GTPase regulator-interacting protein 1"/>
    <property type="match status" value="1"/>
</dbReference>
<dbReference type="Gene3D" id="2.60.40.150">
    <property type="entry name" value="C2 domain"/>
    <property type="match status" value="3"/>
</dbReference>
<dbReference type="InterPro" id="IPR021656">
    <property type="entry name" value="C2-C2_1"/>
</dbReference>
<dbReference type="InterPro" id="IPR000008">
    <property type="entry name" value="C2_dom"/>
</dbReference>
<dbReference type="InterPro" id="IPR035892">
    <property type="entry name" value="C2_domain_sf"/>
</dbReference>
<dbReference type="InterPro" id="IPR041091">
    <property type="entry name" value="RPGRIP1_C"/>
</dbReference>
<dbReference type="InterPro" id="IPR031139">
    <property type="entry name" value="RPGRIP1_fam"/>
</dbReference>
<dbReference type="PANTHER" id="PTHR14240">
    <property type="entry name" value="RETINITIS PIGMENTOSA GTPASE REGULATOR-INTERACTING PROTEIN"/>
    <property type="match status" value="1"/>
</dbReference>
<dbReference type="PANTHER" id="PTHR14240:SF3">
    <property type="entry name" value="X-LINKED RETINITIS PIGMENTOSA GTPASE REGULATOR-INTERACTING PROTEIN 1"/>
    <property type="match status" value="1"/>
</dbReference>
<dbReference type="Pfam" id="PF00168">
    <property type="entry name" value="C2"/>
    <property type="match status" value="1"/>
</dbReference>
<dbReference type="Pfam" id="PF11618">
    <property type="entry name" value="C2-C2_1"/>
    <property type="match status" value="1"/>
</dbReference>
<dbReference type="Pfam" id="PF18111">
    <property type="entry name" value="RPGR1_C"/>
    <property type="match status" value="1"/>
</dbReference>
<dbReference type="SUPFAM" id="SSF49562">
    <property type="entry name" value="C2 domain (Calcium/lipid-binding domain, CaLB)"/>
    <property type="match status" value="2"/>
</dbReference>
<dbReference type="PROSITE" id="PS50004">
    <property type="entry name" value="C2"/>
    <property type="match status" value="1"/>
</dbReference>
<evidence type="ECO:0000250" key="1">
    <source>
        <dbReference type="UniProtKB" id="Q9EPQ2"/>
    </source>
</evidence>
<evidence type="ECO:0000255" key="2"/>
<evidence type="ECO:0000255" key="3">
    <source>
        <dbReference type="PROSITE-ProRule" id="PRU00041"/>
    </source>
</evidence>
<evidence type="ECO:0000256" key="4">
    <source>
        <dbReference type="SAM" id="MobiDB-lite"/>
    </source>
</evidence>
<evidence type="ECO:0000269" key="5">
    <source>
    </source>
</evidence>
<evidence type="ECO:0000269" key="6">
    <source>
    </source>
</evidence>
<evidence type="ECO:0000269" key="7">
    <source>
    </source>
</evidence>
<evidence type="ECO:0000269" key="8">
    <source>
    </source>
</evidence>
<evidence type="ECO:0000269" key="9">
    <source>
    </source>
</evidence>
<evidence type="ECO:0000269" key="10">
    <source>
    </source>
</evidence>
<evidence type="ECO:0000269" key="11">
    <source>
    </source>
</evidence>
<evidence type="ECO:0000269" key="12">
    <source>
    </source>
</evidence>
<evidence type="ECO:0000269" key="13">
    <source>
    </source>
</evidence>
<evidence type="ECO:0000269" key="14">
    <source>
    </source>
</evidence>
<evidence type="ECO:0000269" key="15">
    <source>
    </source>
</evidence>
<evidence type="ECO:0000269" key="16">
    <source>
    </source>
</evidence>
<evidence type="ECO:0000269" key="17">
    <source>
    </source>
</evidence>
<evidence type="ECO:0000269" key="18">
    <source>
    </source>
</evidence>
<evidence type="ECO:0000269" key="19">
    <source>
    </source>
</evidence>
<evidence type="ECO:0000269" key="20">
    <source>
    </source>
</evidence>
<evidence type="ECO:0000303" key="21">
    <source>
    </source>
</evidence>
<evidence type="ECO:0000303" key="22">
    <source>
    </source>
</evidence>
<evidence type="ECO:0000303" key="23">
    <source>
    </source>
</evidence>
<evidence type="ECO:0000305" key="24"/>
<evidence type="ECO:0000305" key="25">
    <source>
    </source>
</evidence>
<evidence type="ECO:0007829" key="26">
    <source>
        <dbReference type="PDB" id="4QAM"/>
    </source>
</evidence>
<comment type="function">
    <text evidence="1 25">May function as scaffolding protein. Required for normal location of RPGR at the connecting cilium of photoreceptor cells. Required for normal disk morphogenesis and disk organization in the outer segment of photoreceptor cells and for survival of photoreceptor cells.</text>
</comment>
<comment type="subunit">
    <text evidence="1 5 6 11 15 16 18 19 20">Forms homodimers and elongated homopolymers (By similarity). Interacts with RPGR (PubMed:10958647, PubMed:10958648, PubMed:24981858). Interacts with NPHP4 (PubMed:16339905, PubMed:21224891). Interacts with NEK4 (PubMed:21685204). Interacts with SPATA7 (PubMed:25398945). Interacts with CEP290/NPHP6; mediating the association between RPGR and CEP290/NPHP6 (PubMed:20200501).</text>
</comment>
<comment type="interaction">
    <interactant intactId="EBI-1050213">
        <id>Q96KN7</id>
    </interactant>
    <interactant intactId="EBI-8637627">
        <id>Q8WTP8</id>
        <label>AEN</label>
    </interactant>
    <organismsDiffer>false</organismsDiffer>
    <experiments>3</experiments>
</comment>
<comment type="interaction">
    <interactant intactId="EBI-1050213">
        <id>Q96KN7</id>
    </interactant>
    <interactant intactId="EBI-712912">
        <id>Q9HC52</id>
        <label>CBX8</label>
    </interactant>
    <organismsDiffer>false</organismsDiffer>
    <experiments>3</experiments>
</comment>
<comment type="interaction">
    <interactant intactId="EBI-1050213">
        <id>Q96KN7</id>
    </interactant>
    <interactant intactId="EBI-10247802">
        <id>Q8IYE0-2</id>
        <label>CCDC146</label>
    </interactant>
    <organismsDiffer>false</organismsDiffer>
    <experiments>3</experiments>
</comment>
<comment type="interaction">
    <interactant intactId="EBI-1050213">
        <id>Q96KN7</id>
    </interactant>
    <interactant intactId="EBI-743375">
        <id>Q9NX63</id>
        <label>CHCHD3</label>
    </interactant>
    <organismsDiffer>false</organismsDiffer>
    <experiments>3</experiments>
</comment>
<comment type="interaction">
    <interactant intactId="EBI-1050213">
        <id>Q96KN7</id>
    </interactant>
    <interactant intactId="EBI-10239155">
        <id>Q1MSJ5-2</id>
        <label>CSPP1</label>
    </interactant>
    <organismsDiffer>false</organismsDiffer>
    <experiments>3</experiments>
</comment>
<comment type="interaction">
    <interactant intactId="EBI-1050213">
        <id>Q96KN7</id>
    </interactant>
    <interactant intactId="EBI-710457">
        <id>Q7L190</id>
        <label>DPPA4</label>
    </interactant>
    <organismsDiffer>false</organismsDiffer>
    <experiments>3</experiments>
</comment>
<comment type="interaction">
    <interactant intactId="EBI-1050213">
        <id>Q96KN7</id>
    </interactant>
    <interactant intactId="EBI-2515330">
        <id>Q96JP0</id>
        <label>FEM1C</label>
    </interactant>
    <organismsDiffer>false</organismsDiffer>
    <experiments>3</experiments>
</comment>
<comment type="interaction">
    <interactant intactId="EBI-1050213">
        <id>Q96KN7</id>
    </interactant>
    <interactant intactId="EBI-923440">
        <id>Q8WXI9</id>
        <label>GATAD2B</label>
    </interactant>
    <organismsDiffer>false</organismsDiffer>
    <experiments>3</experiments>
</comment>
<comment type="interaction">
    <interactant intactId="EBI-1050213">
        <id>Q96KN7</id>
    </interactant>
    <interactant intactId="EBI-751092">
        <id>Q9NQ87</id>
        <label>HEYL</label>
    </interactant>
    <organismsDiffer>false</organismsDiffer>
    <experiments>3</experiments>
</comment>
<comment type="interaction">
    <interactant intactId="EBI-1050213">
        <id>Q96KN7</id>
    </interactant>
    <interactant intactId="EBI-1057615">
        <id>O15479</id>
        <label>MAGEB2</label>
    </interactant>
    <organismsDiffer>false</organismsDiffer>
    <experiments>3</experiments>
</comment>
<comment type="interaction">
    <interactant intactId="EBI-1050213">
        <id>Q96KN7</id>
    </interactant>
    <interactant intactId="EBI-4281852">
        <id>O75161</id>
        <label>NPHP4</label>
    </interactant>
    <organismsDiffer>false</organismsDiffer>
    <experiments>3</experiments>
</comment>
<comment type="interaction">
    <interactant intactId="EBI-1050213">
        <id>Q96KN7</id>
    </interactant>
    <interactant intactId="EBI-6558417">
        <id>Q92834</id>
        <label>RPGR</label>
    </interactant>
    <organismsDiffer>false</organismsDiffer>
    <experiments>10</experiments>
</comment>
<comment type="interaction">
    <interactant intactId="EBI-1050213">
        <id>Q96KN7</id>
    </interactant>
    <interactant intactId="EBI-10189722">
        <id>Q8N5L8</id>
        <label>RPP25L</label>
    </interactant>
    <organismsDiffer>false</organismsDiffer>
    <experiments>3</experiments>
</comment>
<comment type="interaction">
    <interactant intactId="EBI-1050213">
        <id>Q96KN7</id>
    </interactant>
    <interactant intactId="EBI-748391">
        <id>Q9BWG6</id>
        <label>SCNM1</label>
    </interactant>
    <organismsDiffer>false</organismsDiffer>
    <experiments>3</experiments>
</comment>
<comment type="interaction">
    <interactant intactId="EBI-1050213">
        <id>Q96KN7</id>
    </interactant>
    <interactant intactId="EBI-3258000">
        <id>Q9P0N9</id>
        <label>TBC1D7</label>
    </interactant>
    <organismsDiffer>false</organismsDiffer>
    <experiments>3</experiments>
</comment>
<comment type="interaction">
    <interactant intactId="EBI-1050213">
        <id>Q96KN7</id>
    </interactant>
    <interactant intactId="EBI-10178002">
        <id>P0C1Z6-2</id>
        <label>TFPT</label>
    </interactant>
    <organismsDiffer>false</organismsDiffer>
    <experiments>3</experiments>
</comment>
<comment type="interaction">
    <interactant intactId="EBI-1050213">
        <id>Q96KN7</id>
    </interactant>
    <interactant intactId="EBI-492476">
        <id>Q96RU7</id>
        <label>TRIB3</label>
    </interactant>
    <organismsDiffer>false</organismsDiffer>
    <experiments>3</experiments>
</comment>
<comment type="interaction">
    <interactant intactId="EBI-1050213">
        <id>Q96KN7</id>
    </interactant>
    <interactant intactId="EBI-714987">
        <id>Q9Y3M9</id>
        <label>ZNF337</label>
    </interactant>
    <organismsDiffer>false</organismsDiffer>
    <experiments>3</experiments>
</comment>
<comment type="interaction">
    <interactant intactId="EBI-1050213">
        <id>Q96KN7</id>
    </interactant>
    <interactant intactId="EBI-740727">
        <id>Q8TAU3</id>
        <label>ZNF417</label>
    </interactant>
    <organismsDiffer>false</organismsDiffer>
    <experiments>3</experiments>
</comment>
<comment type="interaction">
    <interactant intactId="EBI-1050213">
        <id>Q96KN7</id>
    </interactant>
    <interactant intactId="EBI-10273713">
        <id>Q8TBZ8</id>
        <label>ZNF564</label>
    </interactant>
    <organismsDiffer>false</organismsDiffer>
    <experiments>3</experiments>
</comment>
<comment type="interaction">
    <interactant intactId="EBI-12499377">
        <id>Q96KN7-1</id>
    </interactant>
    <interactant intactId="EBI-12499345">
        <id>O75161-1</id>
        <label>NPHP4</label>
    </interactant>
    <organismsDiffer>false</organismsDiffer>
    <experiments>9</experiments>
</comment>
<comment type="interaction">
    <interactant intactId="EBI-11525164">
        <id>Q96KN7-4</id>
    </interactant>
    <interactant intactId="EBI-16428950">
        <id>A0A0S2Z4G9</id>
        <label>RNF6</label>
    </interactant>
    <organismsDiffer>false</organismsDiffer>
    <experiments>3</experiments>
</comment>
<comment type="interaction">
    <interactant intactId="EBI-11525164">
        <id>Q96KN7-4</id>
    </interactant>
    <interactant intactId="EBI-6558417">
        <id>Q92834</id>
        <label>RPGR</label>
    </interactant>
    <organismsDiffer>false</organismsDiffer>
    <experiments>3</experiments>
</comment>
<comment type="interaction">
    <interactant intactId="EBI-11525164">
        <id>Q96KN7-4</id>
    </interactant>
    <interactant intactId="EBI-492476">
        <id>Q96RU7</id>
        <label>TRIB3</label>
    </interactant>
    <organismsDiffer>false</organismsDiffer>
    <experiments>3</experiments>
</comment>
<comment type="interaction">
    <interactant intactId="EBI-11525164">
        <id>Q96KN7-4</id>
    </interactant>
    <interactant intactId="EBI-16429014">
        <id>A0A0S2Z5X4</id>
        <label>ZNF688</label>
    </interactant>
    <organismsDiffer>false</organismsDiffer>
    <experiments>3</experiments>
</comment>
<comment type="subcellular location">
    <subcellularLocation>
        <location evidence="18">Cell projection</location>
        <location evidence="18">Cilium</location>
    </subcellularLocation>
    <text evidence="1">Situated between the axonemal microtubules and the plasma membrane (By similarity). In the retinal photoreceptor cell layer, localizes at the connecting cilium, a thin bridge linking the cell body and the light-sensing outer segment (By similarity). Colocalizes with RGPR in the photoreceptor connecting cilium (By similarity).</text>
</comment>
<comment type="alternative products">
    <event type="alternative splicing"/>
    <isoform>
        <id>Q96KN7-1</id>
        <name>1</name>
        <sequence type="displayed"/>
    </isoform>
    <isoform>
        <id>Q96KN7-2</id>
        <name>2</name>
        <name>a</name>
        <sequence type="described" ref="VSP_009521 VSP_009525"/>
    </isoform>
    <isoform>
        <id>Q96KN7-3</id>
        <name>3</name>
        <name>b</name>
        <sequence type="described" ref="VSP_009522 VSP_009526"/>
    </isoform>
    <isoform>
        <id>Q96KN7-4</id>
        <name>4</name>
        <sequence type="described" ref="VSP_009519 VSP_009523 VSP_009524"/>
    </isoform>
    <isoform>
        <id>Q96KN7-5</id>
        <name>5</name>
        <sequence type="described" ref="VSP_009520"/>
    </isoform>
    <isoform>
        <id>Q96KN7-6</id>
        <name>6</name>
        <sequence type="described" ref="VSP_009520 VSP_009527"/>
    </isoform>
</comment>
<comment type="tissue specificity">
    <text evidence="5 6 8">Strong expression in retina, with weaker expression in testis. Expressed in other neurons such as amacrine cells. Colocalizes with RGPR in the outer segment of rod photoreceptors and cone outer segments.</text>
</comment>
<comment type="domain">
    <text evidence="19">The C2 domain does not bind calcium ions, and does not bind phosphoinositides.</text>
</comment>
<comment type="disease" evidence="7 12 13 14 19">
    <disease id="DI-00634">
        <name>Leber congenital amaurosis 6</name>
        <acronym>LCA6</acronym>
        <description>A severe dystrophy of the retina, typically becoming evident in the first years of life. Visual function is usually poor and often accompanied by nystagmus, sluggish or near-absent pupillary responses, photophobia, high hyperopia and keratoconus.</description>
        <dbReference type="MIM" id="613826"/>
    </disease>
    <text>The disease is caused by variants affecting the gene represented in this entry.</text>
</comment>
<comment type="disease" evidence="6 9">
    <disease id="DI-00323">
        <name>Cone-rod dystrophy 13</name>
        <acronym>CORD13</acronym>
        <description>An inherited retinal dystrophy characterized by retinal pigment deposits visible on fundus examination, predominantly in the macular region, and initial loss of cone photoreceptors followed by rod degeneration. This leads to decreased visual acuity and sensitivity in the central visual field, followed by loss of peripheral vision. Severe loss of vision occurs earlier than in retinitis pigmentosa, due to cone photoreceptors degenerating at a higher rate than rod photoreceptors.</description>
        <dbReference type="MIM" id="608194"/>
    </disease>
    <text>The disease is caused by variants affecting the gene represented in this entry.</text>
</comment>
<comment type="disease">
    <text evidence="16">Heterozygous non-synonymous variants of RPGRIP1 may cause or increase the susceptibility to various forms of glaucoma, a genetically heterogeneous disorder. It is the second cause of blindness worldwide owing to the progressive degeneration of retinal ganglion neurons (PubMed:21224891).</text>
</comment>
<comment type="similarity">
    <text evidence="24">Belongs to the RPGRIP1 family.</text>
</comment>
<comment type="sequence caution" evidence="24">
    <conflict type="erroneous initiation">
        <sequence resource="EMBL-CDS" id="CAE11866"/>
    </conflict>
    <text>Truncated N-terminus.</text>
</comment>
<reference key="1">
    <citation type="journal article" date="2000" name="Hum. Mol. Genet.">
        <title>The retinitis pigmentosa GTPase regulator (RPGR) interacts with novel transport-like proteins in the outer segments of rod photoreceptors.</title>
        <authorList>
            <person name="Roepman R."/>
            <person name="Bernoud-Hubac N."/>
            <person name="Schick D.E."/>
            <person name="Maugeri A."/>
            <person name="Berger W."/>
            <person name="Ropers H.-H."/>
            <person name="Cremers F.P.M."/>
            <person name="Ferreira P.A."/>
        </authorList>
    </citation>
    <scope>NUCLEOTIDE SEQUENCE [MRNA] (ISOFORMS 2 AND 3)</scope>
    <scope>NUCLEOTIDE SEQUENCE [MRNA] OF 525-1286 (ISOFORM 1)</scope>
    <scope>INTERACTION WITH RPGR</scope>
    <scope>TISSUE SPECIFICITY</scope>
    <scope>VARIANT CORD13 SER-547</scope>
    <source>
        <tissue>Retina</tissue>
    </source>
</reference>
<reference key="2">
    <citation type="journal article" date="2000" name="Hum. Mol. Genet.">
        <title>Identification of a novel protein interacting with RPGR.</title>
        <authorList>
            <person name="Boylan J.P."/>
            <person name="Wright A.F."/>
        </authorList>
    </citation>
    <scope>NUCLEOTIDE SEQUENCE [MRNA] (ISOFORMS 5 AND 6)</scope>
    <scope>INTERACTION WITH RPGR</scope>
    <scope>TISSUE SPECIFICITY</scope>
    <scope>VARIANT GLN-1033</scope>
</reference>
<reference key="3">
    <citation type="journal article" date="2001" name="Eur. J. Hum. Genet.">
        <title>Complete exon-intron structure of the RPGR-interacting protein (RPGRIP1) gene allows the identification of mutations underlying Leber congenital amaurosis.</title>
        <authorList>
            <person name="Gerber S."/>
            <person name="Perrault I."/>
            <person name="Hanein S."/>
            <person name="Barbet F."/>
            <person name="Ducroq D."/>
            <person name="Ghazi I."/>
            <person name="Martin-Coignard D."/>
            <person name="Leowski C."/>
            <person name="Homfray T."/>
            <person name="Dufier J.-L."/>
            <person name="Munnich A."/>
            <person name="Kaplan J."/>
            <person name="Rozet J.-M."/>
        </authorList>
    </citation>
    <scope>NUCLEOTIDE SEQUENCE [GENOMIC DNA / MRNA] (ISOFORM 1)</scope>
    <scope>VARIANTS LCA6 GLU-746 AND GLY-1114</scope>
    <scope>VARIANT GLN-1033</scope>
</reference>
<reference key="4">
    <citation type="journal article" date="2003" name="Nature">
        <title>The DNA sequence and analysis of human chromosome 14.</title>
        <authorList>
            <person name="Heilig R."/>
            <person name="Eckenberg R."/>
            <person name="Petit J.-L."/>
            <person name="Fonknechten N."/>
            <person name="Da Silva C."/>
            <person name="Cattolico L."/>
            <person name="Levy M."/>
            <person name="Barbe V."/>
            <person name="De Berardinis V."/>
            <person name="Ureta-Vidal A."/>
            <person name="Pelletier E."/>
            <person name="Vico V."/>
            <person name="Anthouard V."/>
            <person name="Rowen L."/>
            <person name="Madan A."/>
            <person name="Qin S."/>
            <person name="Sun H."/>
            <person name="Du H."/>
            <person name="Pepin K."/>
            <person name="Artiguenave F."/>
            <person name="Robert C."/>
            <person name="Cruaud C."/>
            <person name="Bruels T."/>
            <person name="Jaillon O."/>
            <person name="Friedlander L."/>
            <person name="Samson G."/>
            <person name="Brottier P."/>
            <person name="Cure S."/>
            <person name="Segurens B."/>
            <person name="Aniere F."/>
            <person name="Samain S."/>
            <person name="Crespeau H."/>
            <person name="Abbasi N."/>
            <person name="Aiach N."/>
            <person name="Boscus D."/>
            <person name="Dickhoff R."/>
            <person name="Dors M."/>
            <person name="Dubois I."/>
            <person name="Friedman C."/>
            <person name="Gouyvenoux M."/>
            <person name="James R."/>
            <person name="Madan A."/>
            <person name="Mairey-Estrada B."/>
            <person name="Mangenot S."/>
            <person name="Martins N."/>
            <person name="Menard M."/>
            <person name="Oztas S."/>
            <person name="Ratcliffe A."/>
            <person name="Shaffer T."/>
            <person name="Trask B."/>
            <person name="Vacherie B."/>
            <person name="Bellemere C."/>
            <person name="Belser C."/>
            <person name="Besnard-Gonnet M."/>
            <person name="Bartol-Mavel D."/>
            <person name="Boutard M."/>
            <person name="Briez-Silla S."/>
            <person name="Combette S."/>
            <person name="Dufosse-Laurent V."/>
            <person name="Ferron C."/>
            <person name="Lechaplais C."/>
            <person name="Louesse C."/>
            <person name="Muselet D."/>
            <person name="Magdelenat G."/>
            <person name="Pateau E."/>
            <person name="Petit E."/>
            <person name="Sirvain-Trukniewicz P."/>
            <person name="Trybou A."/>
            <person name="Vega-Czarny N."/>
            <person name="Bataille E."/>
            <person name="Bluet E."/>
            <person name="Bordelais I."/>
            <person name="Dubois M."/>
            <person name="Dumont C."/>
            <person name="Guerin T."/>
            <person name="Haffray S."/>
            <person name="Hammadi R."/>
            <person name="Muanga J."/>
            <person name="Pellouin V."/>
            <person name="Robert D."/>
            <person name="Wunderle E."/>
            <person name="Gauguet G."/>
            <person name="Roy A."/>
            <person name="Sainte-Marthe L."/>
            <person name="Verdier J."/>
            <person name="Verdier-Discala C."/>
            <person name="Hillier L.W."/>
            <person name="Fulton L."/>
            <person name="McPherson J."/>
            <person name="Matsuda F."/>
            <person name="Wilson R."/>
            <person name="Scarpelli C."/>
            <person name="Gyapay G."/>
            <person name="Wincker P."/>
            <person name="Saurin W."/>
            <person name="Quetier F."/>
            <person name="Waterston R."/>
            <person name="Hood L."/>
            <person name="Weissenbach J."/>
        </authorList>
    </citation>
    <scope>NUCLEOTIDE SEQUENCE [LARGE SCALE GENOMIC DNA]</scope>
</reference>
<reference key="5">
    <citation type="journal article" date="2004" name="Genome Res.">
        <title>The status, quality, and expansion of the NIH full-length cDNA project: the Mammalian Gene Collection (MGC).</title>
        <authorList>
            <consortium name="The MGC Project Team"/>
        </authorList>
    </citation>
    <scope>NUCLEOTIDE SEQUENCE [LARGE SCALE MRNA] (ISOFORM 4)</scope>
    <scope>VARIANT GLN-1033</scope>
    <source>
        <tissue>Brain</tissue>
    </source>
</reference>
<reference key="6">
    <citation type="journal article" date="2007" name="BMC Genomics">
        <title>The full-ORF clone resource of the German cDNA consortium.</title>
        <authorList>
            <person name="Bechtel S."/>
            <person name="Rosenfelder H."/>
            <person name="Duda A."/>
            <person name="Schmidt C.P."/>
            <person name="Ernst U."/>
            <person name="Wellenreuther R."/>
            <person name="Mehrle A."/>
            <person name="Schuster C."/>
            <person name="Bahr A."/>
            <person name="Bloecker H."/>
            <person name="Heubner D."/>
            <person name="Hoerlein A."/>
            <person name="Michel G."/>
            <person name="Wedler H."/>
            <person name="Koehrer K."/>
            <person name="Ottenwaelder B."/>
            <person name="Poustka A."/>
            <person name="Wiemann S."/>
            <person name="Schupp I."/>
        </authorList>
    </citation>
    <scope>NUCLEOTIDE SEQUENCE [LARGE SCALE MRNA] OF 588-1286 (ISOFORM 1)</scope>
    <source>
        <tissue>Retina</tissue>
    </source>
</reference>
<reference key="7">
    <citation type="journal article" date="2002" name="Hum. Mol. Genet.">
        <title>Species-specific subcellular localization of RPGR and RPGRIP isoforms: implications for the phenotypic variability of congenital retinopathies among species.</title>
        <authorList>
            <person name="Mavlyutov T.A."/>
            <person name="Zhao H."/>
            <person name="Ferreira P.A."/>
        </authorList>
    </citation>
    <scope>TISSUE SPECIFICITY</scope>
</reference>
<reference key="8">
    <citation type="journal article" date="2005" name="Proc. Natl. Acad. Sci. U.S.A.">
        <title>Interaction of nephrocystin-4 and RPGRIP1 is disrupted by nephronophthisis or Leber congenital amaurosis-associated mutations.</title>
        <authorList>
            <person name="Roepman R."/>
            <person name="Letteboer S.J."/>
            <person name="Arts H.H."/>
            <person name="van Beersum S.E."/>
            <person name="Lu X."/>
            <person name="Krieger E."/>
            <person name="Ferreira P.A."/>
            <person name="Cremers F.P."/>
        </authorList>
    </citation>
    <scope>INTERACTION WITH NPHP4</scope>
    <scope>VARIANT GLY-876</scope>
    <scope>CHARACTERIZATION OF VARIANT GLY-876</scope>
</reference>
<reference key="9">
    <citation type="journal article" date="2010" name="Kidney Int.">
        <title>The retinitis pigmentosa GTPase regulator interacting protein 1 (RPGRIP1) links RPGR to the nephronophthisis protein network.</title>
        <authorList>
            <person name="Gerner M."/>
            <person name="Haribaskar R."/>
            <person name="Puetz M."/>
            <person name="Czerwitzki J."/>
            <person name="Walz G."/>
            <person name="Schaefer T."/>
        </authorList>
    </citation>
    <scope>INTERACTION WITH CEP290</scope>
</reference>
<reference key="10">
    <citation type="journal article" date="2011" name="Eur. J. Hum. Genet.">
        <title>Evidence for RPGRIP1 gene as risk factor for primary open angle glaucoma.</title>
        <authorList>
            <person name="Fernandez-Martinez L."/>
            <person name="Letteboer S."/>
            <person name="Mardin C.Y."/>
            <person name="Weisschuh N."/>
            <person name="Gramer E."/>
            <person name="Weber B.H."/>
            <person name="Rautenstrauss B."/>
            <person name="Ferreira P.A."/>
            <person name="Kruse F.E."/>
            <person name="Reis A."/>
            <person name="Roepman R."/>
            <person name="Pasutto F."/>
        </authorList>
    </citation>
    <scope>INTERACTION WITH NPHP4</scope>
    <scope>INVOLVEMENT IN GLAUCOMA</scope>
    <scope>VARIANTS LEU-32; ARG-135; VAL-318; THR-363; SER-585; HIS-589; GLN-598; SER-603; GLY-635; ILE-638; VAL-764; ILE-806; HIS-812; LEU-814; GLY-837; VAL-838; THR-841; GLN-852 AND ASP-883</scope>
    <scope>CHARACTERIZATION OF VARIANTS HIS-589; GLN-598; GLY-635; VAL-764; ILE-806; HIS-812; GLY-837 AND VAL-838</scope>
</reference>
<reference key="11">
    <citation type="journal article" date="2011" name="Hum. Mol. Genet.">
        <title>The ciliopathy-associated protein homologs RPGRIP1 and RPGRIP1L are linked to cilium integrity through interaction with Nek4 serine/threonine kinase.</title>
        <authorList>
            <person name="Coene K.L."/>
            <person name="Mans D.A."/>
            <person name="Boldt K."/>
            <person name="Gloeckner C.J."/>
            <person name="van Reeuwijk J."/>
            <person name="Bolat E."/>
            <person name="Roosing S."/>
            <person name="Letteboer S.J."/>
            <person name="Peters T.A."/>
            <person name="Cremers F.P."/>
            <person name="Ueffing M."/>
            <person name="Roepman R."/>
        </authorList>
    </citation>
    <scope>INTERACTION WITH RPGR AND NEK4</scope>
    <scope>SUBCELLULAR LOCATION</scope>
</reference>
<reference key="12">
    <citation type="journal article" date="2015" name="Hum. Mol. Genet.">
        <title>Spata7 is a retinal ciliopathy gene critical for correct RPGRIP1 localization and protein trafficking in the retina.</title>
        <authorList>
            <person name="Eblimit A."/>
            <person name="Nguyen T.M."/>
            <person name="Chen Y."/>
            <person name="Esteve-Rudd J."/>
            <person name="Zhong H."/>
            <person name="Letteboer S."/>
            <person name="van Reeuwijk J."/>
            <person name="Simons D.L."/>
            <person name="Ding Q."/>
            <person name="Wu K.M."/>
            <person name="Li Y."/>
            <person name="van Beersum S."/>
            <person name="Moayedi Y."/>
            <person name="Xu H."/>
            <person name="Pickard P."/>
            <person name="Wang K."/>
            <person name="Gan L."/>
            <person name="Wu S.M."/>
            <person name="Williams D.S."/>
            <person name="Mardon G."/>
            <person name="Roepman R."/>
            <person name="Chen R."/>
        </authorList>
    </citation>
    <scope>INTERACTION WITH SPATA7</scope>
</reference>
<reference key="13">
    <citation type="journal article" date="2014" name="Cell Rep.">
        <title>C2 domains as protein-protein interaction modules in the ciliary transition zone.</title>
        <authorList>
            <person name="Remans K."/>
            <person name="Burger M."/>
            <person name="Vetter I.R."/>
            <person name="Wittinghofer A."/>
        </authorList>
    </citation>
    <scope>X-RAY CRYSTALLOGRAPHY (1.83 ANGSTROMS) OF 1091-1286 IN COMPLEX WITH RPGR</scope>
    <scope>INTERACTION WITH RPGR</scope>
    <scope>DOMAIN</scope>
    <scope>REGION</scope>
    <scope>CHARACTERIZATION OF VARIANT LCA6 GLY-1114</scope>
    <scope>MUTAGENESIS OF GLU-1121; HIS-1174 AND GLU-1245</scope>
</reference>
<reference key="14">
    <citation type="journal article" date="2003" name="J. Med. Genet.">
        <title>Evidence of RPGRIP1 gene mutations associated with recessive cone-rod dystrophy.</title>
        <authorList>
            <person name="Hameed A."/>
            <person name="Abid A."/>
            <person name="Aziz A."/>
            <person name="Ismail M."/>
            <person name="Mehdi S.Q."/>
            <person name="Khaliq S."/>
        </authorList>
    </citation>
    <scope>VARIANTS CORD13 SER-547 AND LEU-827</scope>
</reference>
<reference key="15">
    <citation type="journal article" date="2007" name="Hum. Mutat.">
        <title>Centrosomal-ciliary gene CEP290/NPHP6 mutations result in blindness with unexpected sparing of photoreceptors and visual brain: implications for therapy of Leber congenital amaurosis.</title>
        <authorList>
            <person name="Cideciyan A.V."/>
            <person name="Aleman T.S."/>
            <person name="Jacobson S.G."/>
            <person name="Khanna H."/>
            <person name="Sumaroka A."/>
            <person name="Aguirre G.K."/>
            <person name="Schwartz S.B."/>
            <person name="Windsor E.A."/>
            <person name="He S."/>
            <person name="Chang B."/>
            <person name="Stone E.M."/>
            <person name="Swaroop A."/>
        </authorList>
    </citation>
    <scope>VARIANT LCA6 GLU-1211</scope>
</reference>
<reference key="16">
    <citation type="journal article" date="2007" name="Ophthalmology">
        <title>Leber congenital amaurosis caused by an RPGRIP1 mutation shows treatment potential.</title>
        <authorList>
            <person name="Jacobson S.G."/>
            <person name="Cideciyan A.V."/>
            <person name="Aleman T.S."/>
            <person name="Sumaroka A."/>
            <person name="Schwartz S.B."/>
            <person name="Roman A.J."/>
            <person name="Stone E.M."/>
        </authorList>
    </citation>
    <scope>VARIANT LCA6 GLU-1211</scope>
</reference>
<reference key="17">
    <citation type="journal article" date="2008" name="Mol. Vis.">
        <title>Molecular characterization of Leber congenital amaurosis in Koreans.</title>
        <authorList>
            <person name="Seong M.W."/>
            <person name="Kim S.Y."/>
            <person name="Yu Y.S."/>
            <person name="Hwang J.M."/>
            <person name="Kim J.Y."/>
            <person name="Park S.S."/>
        </authorList>
    </citation>
    <scope>VARIANT LCA6 PRO-631</scope>
    <scope>VARIANTS GLN-96; GLU-192; PHE-432; TRP-601; GLN-1033 AND LEU-1057</scope>
</reference>
<reference key="18">
    <citation type="journal article" date="2011" name="PLoS ONE">
        <title>Detection of variants in 15 genes in 87 unrelated Chinese patients with Leber congenital amaurosis.</title>
        <authorList>
            <person name="Li L."/>
            <person name="Xiao X."/>
            <person name="Li S."/>
            <person name="Jia X."/>
            <person name="Wang P."/>
            <person name="Guo X."/>
            <person name="Jiao X."/>
            <person name="Zhang Q."/>
            <person name="Hejtmancik J.F."/>
        </authorList>
    </citation>
    <scope>VARIANT GLN-1130</scope>
</reference>
<keyword id="KW-0002">3D-structure</keyword>
<keyword id="KW-0025">Alternative splicing</keyword>
<keyword id="KW-0966">Cell projection</keyword>
<keyword id="KW-1186">Ciliopathy</keyword>
<keyword id="KW-0969">Cilium</keyword>
<keyword id="KW-0175">Coiled coil</keyword>
<keyword id="KW-0182">Cone-rod dystrophy</keyword>
<keyword id="KW-0225">Disease variant</keyword>
<keyword id="KW-0955">Glaucoma</keyword>
<keyword id="KW-0901">Leber congenital amaurosis</keyword>
<keyword id="KW-1267">Proteomics identification</keyword>
<keyword id="KW-1185">Reference proteome</keyword>
<keyword id="KW-0716">Sensory transduction</keyword>
<keyword id="KW-0844">Vision</keyword>
<organism>
    <name type="scientific">Homo sapiens</name>
    <name type="common">Human</name>
    <dbReference type="NCBI Taxonomy" id="9606"/>
    <lineage>
        <taxon>Eukaryota</taxon>
        <taxon>Metazoa</taxon>
        <taxon>Chordata</taxon>
        <taxon>Craniata</taxon>
        <taxon>Vertebrata</taxon>
        <taxon>Euteleostomi</taxon>
        <taxon>Mammalia</taxon>
        <taxon>Eutheria</taxon>
        <taxon>Euarchontoglires</taxon>
        <taxon>Primates</taxon>
        <taxon>Haplorrhini</taxon>
        <taxon>Catarrhini</taxon>
        <taxon>Hominidae</taxon>
        <taxon>Homo</taxon>
    </lineage>
</organism>
<protein>
    <recommendedName>
        <fullName>X-linked retinitis pigmentosa GTPase regulator-interacting protein 1</fullName>
        <shortName>RPGR-interacting protein 1</shortName>
    </recommendedName>
</protein>
<proteinExistence type="evidence at protein level"/>
<sequence length="1286" mass="146682">MSHLVDPTSGDLPVRDIDAIPLVLPASKGKNMKTQPPLSRMNREELEDSFFRLREDHMLVKELSWKQQDEIKRLRTTLLRLTAAGRDLRVAEEAAPLSETARRGQKAGWRQRLSMHQRPQMHRLQGHFHCVGPASPRRAQPRVQVGHRQLHTAGAPVPEKPKRGPRDRLSYTAPPSFKEHATNENRGEVASKPSELVSGSNSIISFSSVISMAKPIGLCMPNSAHIMASNTMQVEEPPKSPEKMWPKDENFEQRSSLECAQKAAELRASIKEKVELIRLKKLLHERNASLVMTKAQLTEVQEAYETLLQKNQGILSAAHEALLKQVNELRAELKEESKKAVSLKSQLEDVSILQMTLKEFQERVEDLEKERKLLNDNYDKLLESMLDSSDSSSQPHWSNELIAEQLQQQVSQLQDQLDAELEDKRKVLLELSREKAQNEDLKLEVTNILQKHKQEVELLQNAATISQPPDRQSEPATHPAVLQENTQIEPSEPKNQEEKKLSQVLNELQVSHAETTLELEKTRDMLILQRKINVCYQEELEAMMTKADNDNRDHKEKLERLTRLLDLKNNRIKQLEGILRSHDLPTSEQLKDVAYGTRPLSLCLETLPAHGDEDKVDISLLHQGENLFELHIHQAFLTSAALAQAGDTQPTTFCTYSFYDFETHCTPLSVGPQPLYDFTSQYVMETDSLFLHYLQEASARLDIHQAMASEHSTLAAGWICFDRVLETVEKVHGLATLIGAGGEEFGVLEYWMRLRFPIKPSLQACNKRKKAQVYLSTDVLGGRKAQEEEFRSESWEPQNELWIEITKCCGLRSRWLGTQPSPYAVYRFFTFSDHDTAIIPASNNPYFRDQARFPVLVTSDLDHYLRREALSIHVFDDEDLEPGSYLGRARVPLLPLAKNESIKGDFNLTDPAEKPNGSIQVQLDWKFPYIPPESFLKPEAQTKGKDTKDSSKISSEEEKASFPSQDQMASPEVPIEAGQYRSKRKPPHGGERKEKEHQVVSYSRRKHGKRIGVQGKNRMEYLSLNILNGNTPEQVNYTEWKFSETNSFIGDGFKNQHEEEEMTLSHSALKQKEPLHPVNDKESSEQGSEVSEAQTTDSDDVIVPPMSQKYPKADSEKMCIEIVSLAFYPEAEVMSDENIKQVYVEYKFYDLPLSETETPVSLRKPRAGEEIHFHFSKVIDLDPQEQQGRRRFLFDMLNGQDPDQGHLKFTVVSDPLDEEKKECEEVGYAYLQLWQILESGRDILEQELDIVSPEDLATPIGRLKVSLQAAAVLHAIYKEMTEDLFS</sequence>
<accession>Q96KN7</accession>
<accession>Q7Z2W6</accession>
<accession>Q8IXV5</accession>
<accession>Q96QA8</accession>
<accession>Q9HB94</accession>
<accession>Q9HB95</accession>
<accession>Q9HBK6</accession>
<accession>Q9NR40</accession>
<gene>
    <name type="primary">RPGRIP1</name>
</gene>
<name>RPGR1_HUMAN</name>
<feature type="chain" id="PRO_0000097432" description="X-linked retinitis pigmentosa GTPase regulator-interacting protein 1">
    <location>
        <begin position="1"/>
        <end position="1286"/>
    </location>
</feature>
<feature type="domain" description="C2" evidence="3">
    <location>
        <begin position="781"/>
        <end position="906"/>
    </location>
</feature>
<feature type="region of interest" description="Disordered" evidence="4">
    <location>
        <begin position="144"/>
        <end position="193"/>
    </location>
</feature>
<feature type="region of interest" description="Disordered" evidence="4">
    <location>
        <begin position="934"/>
        <end position="1008"/>
    </location>
</feature>
<feature type="region of interest" description="Disordered" evidence="4">
    <location>
        <begin position="1058"/>
        <end position="1108"/>
    </location>
</feature>
<feature type="region of interest" description="Interaction with RPGR" evidence="19">
    <location>
        <begin position="1091"/>
        <end position="1281"/>
    </location>
</feature>
<feature type="coiled-coil region" evidence="2">
    <location>
        <begin position="294"/>
        <end position="584"/>
    </location>
</feature>
<feature type="compositionally biased region" description="Basic and acidic residues" evidence="4">
    <location>
        <begin position="159"/>
        <end position="169"/>
    </location>
</feature>
<feature type="compositionally biased region" description="Basic and acidic residues" evidence="4">
    <location>
        <begin position="177"/>
        <end position="189"/>
    </location>
</feature>
<feature type="compositionally biased region" description="Basic and acidic residues" evidence="4">
    <location>
        <begin position="940"/>
        <end position="960"/>
    </location>
</feature>
<feature type="compositionally biased region" description="Basic and acidic residues" evidence="4">
    <location>
        <begin position="988"/>
        <end position="998"/>
    </location>
</feature>
<feature type="compositionally biased region" description="Basic and acidic residues" evidence="4">
    <location>
        <begin position="1070"/>
        <end position="1084"/>
    </location>
</feature>
<feature type="compositionally biased region" description="Polar residues" evidence="4">
    <location>
        <begin position="1085"/>
        <end position="1096"/>
    </location>
</feature>
<feature type="splice variant" id="VSP_009522" description="In isoform 3." evidence="22">
    <location>
        <begin position="1"/>
        <end position="641"/>
    </location>
</feature>
<feature type="splice variant" id="VSP_009521" description="In isoform 2." evidence="22">
    <location>
        <begin position="1"/>
        <end position="617"/>
    </location>
</feature>
<feature type="splice variant" id="VSP_009520" description="In isoform 5 and isoform 6." evidence="21">
    <location>
        <begin position="1"/>
        <end position="384"/>
    </location>
</feature>
<feature type="splice variant" id="VSP_009519" description="In isoform 4." evidence="23">
    <location>
        <begin position="1"/>
        <end position="358"/>
    </location>
</feature>
<feature type="splice variant" id="VSP_009523" description="In isoform 4." evidence="23">
    <original>EFQERVEDLEKERKLLNDNYDKLLE</original>
    <variation>MLKLDNKDVISHPLGYPSESLLSIA</variation>
    <location>
        <begin position="359"/>
        <end position="383"/>
    </location>
</feature>
<feature type="splice variant" id="VSP_009524" description="In isoform 4." evidence="23">
    <location>
        <begin position="588"/>
        <end position="903"/>
    </location>
</feature>
<feature type="splice variant" id="VSP_009525" description="In isoform 2." evidence="22">
    <original>ISLLHQ</original>
    <variation>MTFQHL</variation>
    <location>
        <begin position="618"/>
        <end position="623"/>
    </location>
</feature>
<feature type="splice variant" id="VSP_009526" description="In isoform 3." evidence="22">
    <original>LAQAGDTQPTTFCTYSFYDFETHCTPLSVGPQ</original>
    <variation>MLLMAPDRCRYVWKHCQPMEMRIKWIFLCCIR</variation>
    <location>
        <begin position="642"/>
        <end position="673"/>
    </location>
</feature>
<feature type="splice variant" id="VSP_009527" description="In isoform 6." evidence="21">
    <location>
        <begin position="966"/>
        <end position="1286"/>
    </location>
</feature>
<feature type="sequence variant" id="VAR_065720" evidence="16">
    <original>M</original>
    <variation>L</variation>
    <location>
        <position position="32"/>
    </location>
</feature>
<feature type="sequence variant" id="VAR_057772" description="In dbSNP:rs1040904." evidence="14">
    <original>P</original>
    <variation>Q</variation>
    <location>
        <position position="96"/>
    </location>
</feature>
<feature type="sequence variant" id="VAR_065721" description="In dbSNP:rs1429612086." evidence="16">
    <original>S</original>
    <variation>R</variation>
    <location>
        <position position="135"/>
    </location>
</feature>
<feature type="sequence variant" id="VAR_017830" description="In dbSNP:rs6571751." evidence="14">
    <original>K</original>
    <variation>E</variation>
    <location>
        <position position="192"/>
    </location>
</feature>
<feature type="sequence variant" id="VAR_065722" description="In a patient with primary open angle glaucoma; dbSNP:rs1325466987." evidence="16">
    <original>A</original>
    <variation>V</variation>
    <location>
        <position position="318"/>
    </location>
</feature>
<feature type="sequence variant" id="VAR_065723" description="In a patient with normal tension glaucoma." evidence="16">
    <original>R</original>
    <variation>T</variation>
    <location>
        <position position="363"/>
    </location>
</feature>
<feature type="sequence variant" id="VAR_067184" description="Found in a patient with LCA6; dbSNP:rs190985984." evidence="14">
    <original>S</original>
    <variation>F</variation>
    <location>
        <position position="432"/>
    </location>
</feature>
<feature type="sequence variant" id="VAR_017831" description="In CORD13; dbSNP:rs10151259." evidence="6 9">
    <original>A</original>
    <variation>S</variation>
    <location>
        <position position="547"/>
    </location>
</feature>
<feature type="sequence variant" id="VAR_065724" description="In dbSNP:rs147586703." evidence="16">
    <original>P</original>
    <variation>S</variation>
    <location>
        <position position="585"/>
    </location>
</feature>
<feature type="sequence variant" id="VAR_065725" description="Does not affect the interaction with NPHP4; dbSNP:rs34067949." evidence="16">
    <original>Q</original>
    <variation>H</variation>
    <location>
        <position position="589"/>
    </location>
</feature>
<feature type="sequence variant" id="VAR_065726" description="Found in patients with primary open angle glaucoma and juvenile open angle glaucoma; affects the interaction with NPHP4; dbSNP:rs74034910." evidence="16">
    <original>R</original>
    <variation>Q</variation>
    <location>
        <position position="598"/>
    </location>
</feature>
<feature type="sequence variant" id="VAR_017832" description="In dbSNP:rs3748360.">
    <original>S</original>
    <variation>L</variation>
    <location>
        <position position="601"/>
    </location>
</feature>
<feature type="sequence variant" id="VAR_067185" description="Found in a patient with LCA6; dbSNP:rs3748360." evidence="14">
    <original>S</original>
    <variation>W</variation>
    <location>
        <position position="601"/>
    </location>
</feature>
<feature type="sequence variant" id="VAR_065727" description="In dbSNP:rs1217810346." evidence="16">
    <original>C</original>
    <variation>S</variation>
    <location>
        <position position="603"/>
    </location>
</feature>
<feature type="sequence variant" id="VAR_067186" description="In LCA6." evidence="14">
    <original>H</original>
    <variation>P</variation>
    <location>
        <position position="631"/>
    </location>
</feature>
<feature type="sequence variant" id="VAR_065728" description="In a patient with normal tension glaucoma and a patient with primary open angle glaucoma; affects the interaction with NPHP4; dbSNP:rs200325360." evidence="16">
    <original>A</original>
    <variation>G</variation>
    <location>
        <position position="635"/>
    </location>
</feature>
<feature type="sequence variant" id="VAR_065729" description="In dbSNP:rs1010290273." evidence="16">
    <original>T</original>
    <variation>I</variation>
    <location>
        <position position="638"/>
    </location>
</feature>
<feature type="sequence variant" id="VAR_017833" description="In LCA6; dbSNP:rs61751268." evidence="7">
    <original>G</original>
    <variation>E</variation>
    <location>
        <position position="746"/>
    </location>
</feature>
<feature type="sequence variant" id="VAR_065730" description="Does not affect the interaction with NPHP4; dbSNP:rs758652031." evidence="16">
    <original>A</original>
    <variation>V</variation>
    <location>
        <position position="764"/>
    </location>
</feature>
<feature type="sequence variant" id="VAR_065731" description="In a patient with primary open angle glaucoma who also carries variant K-352 in MYOC; affects the interaction with NPHP4; dbSNP:rs142796310." evidence="16">
    <original>T</original>
    <variation>I</variation>
    <location>
        <position position="806"/>
    </location>
</feature>
<feature type="sequence variant" id="VAR_065732" description="Does not affect the interaction with NPHP4." evidence="16">
    <original>R</original>
    <variation>H</variation>
    <location>
        <position position="812"/>
    </location>
</feature>
<feature type="sequence variant" id="VAR_065733" description="In dbSNP:rs372647080." evidence="16">
    <original>R</original>
    <variation>L</variation>
    <location>
        <position position="814"/>
    </location>
</feature>
<feature type="sequence variant" id="VAR_017834" description="In CORD13; dbSNP:rs28937883." evidence="9">
    <original>R</original>
    <variation>L</variation>
    <location>
        <position position="827"/>
    </location>
</feature>
<feature type="sequence variant" id="VAR_065734" description="In a patient with primary open angle glaucoma and a patient with juvenile open angle glaucoma; affects the interaction with NPHP4; dbSNP:rs373515194." evidence="16">
    <original>A</original>
    <variation>G</variation>
    <location>
        <position position="837"/>
    </location>
</feature>
<feature type="sequence variant" id="VAR_065735" description="In a patient with normal tension glaucoma and a patient with primary open angle glaucoma; affects the interaction with NPHP4; dbSNP:rs772480252." evidence="16">
    <original>I</original>
    <variation>V</variation>
    <location>
        <position position="838"/>
    </location>
</feature>
<feature type="sequence variant" id="VAR_065736" description="In dbSNP:rs1883053136." evidence="16">
    <original>A</original>
    <variation>T</variation>
    <location>
        <position position="841"/>
    </location>
</feature>
<feature type="sequence variant" id="VAR_065737" description="In dbSNP:rs181758389." evidence="16">
    <original>R</original>
    <variation>Q</variation>
    <location>
        <position position="852"/>
    </location>
</feature>
<feature type="sequence variant" id="VAR_076792" description="Impairs interaction with NPHP4; dbSNP:rs61751274." evidence="11">
    <original>D</original>
    <variation>G</variation>
    <location>
        <position position="876"/>
    </location>
</feature>
<feature type="sequence variant" id="VAR_065738" evidence="16">
    <original>G</original>
    <variation>D</variation>
    <location>
        <position position="883"/>
    </location>
</feature>
<feature type="sequence variant" id="VAR_057773" description="In dbSNP:rs35810926.">
    <original>A</original>
    <variation>P</variation>
    <location>
        <position position="960"/>
    </location>
</feature>
<feature type="sequence variant" id="VAR_017835" description="In dbSNP:rs3748361." evidence="5 7 10 14">
    <original>E</original>
    <variation>Q</variation>
    <location>
        <position position="1033"/>
    </location>
</feature>
<feature type="sequence variant" id="VAR_067187" description="Found in a patient associated with LCA6; dbSNP:rs201521970." evidence="14">
    <original>H</original>
    <variation>L</variation>
    <location>
        <position position="1057"/>
    </location>
</feature>
<feature type="sequence variant" id="VAR_017836" description="In LCA6; no effect on interaction with RPGR; dbSNP:rs17103671." evidence="7 19">
    <original>D</original>
    <variation>G</variation>
    <location>
        <position position="1114"/>
    </location>
</feature>
<feature type="sequence variant" id="VAR_067188" description="Found in a patient with LCA6." evidence="17">
    <original>E</original>
    <variation>Q</variation>
    <location>
        <position position="1130"/>
    </location>
</feature>
<feature type="sequence variant" id="VAR_076823" description="In LCA6." evidence="12 13">
    <original>V</original>
    <variation>E</variation>
    <location>
        <position position="1211"/>
    </location>
</feature>
<feature type="sequence variant" id="VAR_057774" description="In dbSNP:rs34725281.">
    <original>G</original>
    <variation>E</variation>
    <location>
        <position position="1240"/>
    </location>
</feature>
<feature type="mutagenesis site" description="Nearly abolishes interaction with RPGR; when associated with A-1174 and A-1245." evidence="19">
    <original>E</original>
    <variation>A</variation>
    <location>
        <position position="1121"/>
    </location>
</feature>
<feature type="mutagenesis site" description="Decreases interaction with RPGR." evidence="19">
    <original>E</original>
    <variation>K</variation>
    <location>
        <position position="1121"/>
    </location>
</feature>
<feature type="mutagenesis site" description="Nearly abolishes interaction with RPGR; when associated with A-1121 and A-1245." evidence="19">
    <original>H</original>
    <variation>A</variation>
    <location>
        <position position="1174"/>
    </location>
</feature>
<feature type="mutagenesis site" description="Abolishes interaction with RPGR." evidence="19">
    <original>H</original>
    <variation>D</variation>
    <location>
        <position position="1174"/>
    </location>
</feature>
<feature type="mutagenesis site" description="Nearly abolishes interaction with RPGR; when associated with A-1121 and A-1174." evidence="19">
    <original>E</original>
    <variation>A</variation>
    <location>
        <position position="1245"/>
    </location>
</feature>
<feature type="mutagenesis site" description="No effect on interaction with RPGR." evidence="19">
    <original>E</original>
    <variation>K</variation>
    <location>
        <position position="1245"/>
    </location>
</feature>
<feature type="sequence conflict" description="In Ref. 1; AAG10246." evidence="24" ref="1">
    <location>
        <position position="539"/>
    </location>
</feature>
<feature type="sequence conflict" description="In Ref. 1; AAG10246." evidence="24" ref="1">
    <original>HK</original>
    <variation>SQR</variation>
    <location>
        <begin position="554"/>
        <end position="555"/>
    </location>
</feature>
<feature type="sequence conflict" description="In Ref. 6; CAE11866." evidence="24" ref="6">
    <original>G</original>
    <variation>R</variation>
    <location>
        <position position="611"/>
    </location>
</feature>
<feature type="sequence conflict" description="In Ref. 6; CAE11866." evidence="24" ref="6">
    <original>P</original>
    <variation>L</variation>
    <location>
        <position position="1159"/>
    </location>
</feature>
<feature type="strand" evidence="26">
    <location>
        <begin position="1117"/>
        <end position="1127"/>
    </location>
</feature>
<feature type="helix" evidence="26">
    <location>
        <begin position="1132"/>
        <end position="1135"/>
    </location>
</feature>
<feature type="strand" evidence="26">
    <location>
        <begin position="1141"/>
        <end position="1145"/>
    </location>
</feature>
<feature type="helix" evidence="26">
    <location>
        <begin position="1153"/>
        <end position="1156"/>
    </location>
</feature>
<feature type="strand" evidence="26">
    <location>
        <begin position="1171"/>
        <end position="1180"/>
    </location>
</feature>
<feature type="turn" evidence="26">
    <location>
        <begin position="1183"/>
        <end position="1185"/>
    </location>
</feature>
<feature type="helix" evidence="26">
    <location>
        <begin position="1187"/>
        <end position="1197"/>
    </location>
</feature>
<feature type="strand" evidence="26">
    <location>
        <begin position="1204"/>
        <end position="1213"/>
    </location>
</feature>
<feature type="helix" evidence="26">
    <location>
        <begin position="1220"/>
        <end position="1222"/>
    </location>
</feature>
<feature type="strand" evidence="26">
    <location>
        <begin position="1224"/>
        <end position="1232"/>
    </location>
</feature>
<feature type="helix" evidence="26">
    <location>
        <begin position="1233"/>
        <end position="1239"/>
    </location>
</feature>
<feature type="strand" evidence="26">
    <location>
        <begin position="1246"/>
        <end position="1251"/>
    </location>
</feature>
<feature type="turn" evidence="26">
    <location>
        <begin position="1253"/>
        <end position="1255"/>
    </location>
</feature>
<feature type="strand" evidence="26">
    <location>
        <begin position="1258"/>
        <end position="1268"/>
    </location>
</feature>
<feature type="helix" evidence="26">
    <location>
        <begin position="1270"/>
        <end position="1282"/>
    </location>
</feature>